<dbReference type="EMBL" id="AE017198">
    <property type="protein sequence ID" value="AAS08357.1"/>
    <property type="molecule type" value="Genomic_DNA"/>
</dbReference>
<dbReference type="RefSeq" id="WP_011161528.1">
    <property type="nucleotide sequence ID" value="NC_005362.1"/>
</dbReference>
<dbReference type="SMR" id="Q74L58"/>
<dbReference type="GeneID" id="83569786"/>
<dbReference type="KEGG" id="ljo:LJ_0367"/>
<dbReference type="eggNOG" id="COG0102">
    <property type="taxonomic scope" value="Bacteria"/>
</dbReference>
<dbReference type="HOGENOM" id="CLU_082184_2_2_9"/>
<dbReference type="Proteomes" id="UP000000581">
    <property type="component" value="Chromosome"/>
</dbReference>
<dbReference type="GO" id="GO:0022625">
    <property type="term" value="C:cytosolic large ribosomal subunit"/>
    <property type="evidence" value="ECO:0007669"/>
    <property type="project" value="TreeGrafter"/>
</dbReference>
<dbReference type="GO" id="GO:0003729">
    <property type="term" value="F:mRNA binding"/>
    <property type="evidence" value="ECO:0007669"/>
    <property type="project" value="TreeGrafter"/>
</dbReference>
<dbReference type="GO" id="GO:0003735">
    <property type="term" value="F:structural constituent of ribosome"/>
    <property type="evidence" value="ECO:0007669"/>
    <property type="project" value="InterPro"/>
</dbReference>
<dbReference type="GO" id="GO:0017148">
    <property type="term" value="P:negative regulation of translation"/>
    <property type="evidence" value="ECO:0007669"/>
    <property type="project" value="TreeGrafter"/>
</dbReference>
<dbReference type="GO" id="GO:0006412">
    <property type="term" value="P:translation"/>
    <property type="evidence" value="ECO:0007669"/>
    <property type="project" value="UniProtKB-UniRule"/>
</dbReference>
<dbReference type="CDD" id="cd00392">
    <property type="entry name" value="Ribosomal_L13"/>
    <property type="match status" value="1"/>
</dbReference>
<dbReference type="FunFam" id="3.90.1180.10:FF:000001">
    <property type="entry name" value="50S ribosomal protein L13"/>
    <property type="match status" value="1"/>
</dbReference>
<dbReference type="Gene3D" id="3.90.1180.10">
    <property type="entry name" value="Ribosomal protein L13"/>
    <property type="match status" value="1"/>
</dbReference>
<dbReference type="HAMAP" id="MF_01366">
    <property type="entry name" value="Ribosomal_uL13"/>
    <property type="match status" value="1"/>
</dbReference>
<dbReference type="InterPro" id="IPR005822">
    <property type="entry name" value="Ribosomal_uL13"/>
</dbReference>
<dbReference type="InterPro" id="IPR005823">
    <property type="entry name" value="Ribosomal_uL13_bac-type"/>
</dbReference>
<dbReference type="InterPro" id="IPR023563">
    <property type="entry name" value="Ribosomal_uL13_CS"/>
</dbReference>
<dbReference type="InterPro" id="IPR036899">
    <property type="entry name" value="Ribosomal_uL13_sf"/>
</dbReference>
<dbReference type="NCBIfam" id="TIGR01066">
    <property type="entry name" value="rplM_bact"/>
    <property type="match status" value="1"/>
</dbReference>
<dbReference type="PANTHER" id="PTHR11545:SF2">
    <property type="entry name" value="LARGE RIBOSOMAL SUBUNIT PROTEIN UL13M"/>
    <property type="match status" value="1"/>
</dbReference>
<dbReference type="PANTHER" id="PTHR11545">
    <property type="entry name" value="RIBOSOMAL PROTEIN L13"/>
    <property type="match status" value="1"/>
</dbReference>
<dbReference type="Pfam" id="PF00572">
    <property type="entry name" value="Ribosomal_L13"/>
    <property type="match status" value="1"/>
</dbReference>
<dbReference type="PIRSF" id="PIRSF002181">
    <property type="entry name" value="Ribosomal_L13"/>
    <property type="match status" value="1"/>
</dbReference>
<dbReference type="SUPFAM" id="SSF52161">
    <property type="entry name" value="Ribosomal protein L13"/>
    <property type="match status" value="1"/>
</dbReference>
<dbReference type="PROSITE" id="PS00783">
    <property type="entry name" value="RIBOSOMAL_L13"/>
    <property type="match status" value="1"/>
</dbReference>
<reference key="1">
    <citation type="journal article" date="2004" name="Proc. Natl. Acad. Sci. U.S.A.">
        <title>The genome sequence of the probiotic intestinal bacterium Lactobacillus johnsonii NCC 533.</title>
        <authorList>
            <person name="Pridmore R.D."/>
            <person name="Berger B."/>
            <person name="Desiere F."/>
            <person name="Vilanova D."/>
            <person name="Barretto C."/>
            <person name="Pittet A.-C."/>
            <person name="Zwahlen M.-C."/>
            <person name="Rouvet M."/>
            <person name="Altermann E."/>
            <person name="Barrangou R."/>
            <person name="Mollet B."/>
            <person name="Mercenier A."/>
            <person name="Klaenhammer T."/>
            <person name="Arigoni F."/>
            <person name="Schell M.A."/>
        </authorList>
    </citation>
    <scope>NUCLEOTIDE SEQUENCE [LARGE SCALE GENOMIC DNA]</scope>
    <source>
        <strain>CNCM I-1225 / La1 / NCC 533</strain>
    </source>
</reference>
<proteinExistence type="inferred from homology"/>
<organism>
    <name type="scientific">Lactobacillus johnsonii (strain CNCM I-12250 / La1 / NCC 533)</name>
    <dbReference type="NCBI Taxonomy" id="257314"/>
    <lineage>
        <taxon>Bacteria</taxon>
        <taxon>Bacillati</taxon>
        <taxon>Bacillota</taxon>
        <taxon>Bacilli</taxon>
        <taxon>Lactobacillales</taxon>
        <taxon>Lactobacillaceae</taxon>
        <taxon>Lactobacillus</taxon>
    </lineage>
</organism>
<evidence type="ECO:0000255" key="1">
    <source>
        <dbReference type="HAMAP-Rule" id="MF_01366"/>
    </source>
</evidence>
<evidence type="ECO:0000305" key="2"/>
<gene>
    <name evidence="1" type="primary">rplM</name>
    <name type="ordered locus">LJ_0367</name>
</gene>
<keyword id="KW-0687">Ribonucleoprotein</keyword>
<keyword id="KW-0689">Ribosomal protein</keyword>
<comment type="function">
    <text evidence="1">This protein is one of the early assembly proteins of the 50S ribosomal subunit, although it is not seen to bind rRNA by itself. It is important during the early stages of 50S assembly.</text>
</comment>
<comment type="subunit">
    <text evidence="1">Part of the 50S ribosomal subunit.</text>
</comment>
<comment type="similarity">
    <text evidence="1">Belongs to the universal ribosomal protein uL13 family.</text>
</comment>
<sequence>MRTTPLAKTSDIKRKWYVIDATDVSLGRLSTAVASILRGKNKPQYTPNVDTGDYVIVVNAAKLKLTGKKATDKIYYRHSDYRGGLRATPAGELLAKNPVRLVELSVKGMLPKNTLGHQEFMKMHVYAGEDHEHAAQKPEKLDINELI</sequence>
<name>RL13_LACJO</name>
<protein>
    <recommendedName>
        <fullName evidence="1">Large ribosomal subunit protein uL13</fullName>
    </recommendedName>
    <alternativeName>
        <fullName evidence="2">50S ribosomal protein L13</fullName>
    </alternativeName>
</protein>
<accession>Q74L58</accession>
<feature type="chain" id="PRO_1000055400" description="Large ribosomal subunit protein uL13">
    <location>
        <begin position="1"/>
        <end position="147"/>
    </location>
</feature>